<gene>
    <name type="primary">dnaB</name>
    <name type="ordered locus">RBE_0929</name>
</gene>
<reference key="1">
    <citation type="journal article" date="2006" name="PLoS Genet.">
        <title>Genome sequence of Rickettsia bellii illuminates the role of amoebae in gene exchanges between intracellular pathogens.</title>
        <authorList>
            <person name="Ogata H."/>
            <person name="La Scola B."/>
            <person name="Audic S."/>
            <person name="Renesto P."/>
            <person name="Blanc G."/>
            <person name="Robert C."/>
            <person name="Fournier P.-E."/>
            <person name="Claverie J.-M."/>
            <person name="Raoult D."/>
        </authorList>
    </citation>
    <scope>NUCLEOTIDE SEQUENCE [LARGE SCALE GENOMIC DNA]</scope>
    <source>
        <strain>RML369-C</strain>
    </source>
</reference>
<keyword id="KW-0067">ATP-binding</keyword>
<keyword id="KW-0235">DNA replication</keyword>
<keyword id="KW-0238">DNA-binding</keyword>
<keyword id="KW-0347">Helicase</keyword>
<keyword id="KW-0378">Hydrolase</keyword>
<keyword id="KW-0413">Isomerase</keyword>
<keyword id="KW-0547">Nucleotide-binding</keyword>
<keyword id="KW-0639">Primosome</keyword>
<sequence length="498" mass="56183">MARNKTNNDKNIANDEASTVLARVLPSNVQAEQMLLGAILTNNELLNYVSEFLRSEHFFEPIHQKIYNGIEVITEKGLIATPITLRSMLANDELFHEMEGAEYLAKLVTMSMMVINPIDYGKIIYDLAIKRYLINIGEEVVNDAYNSSLEFEAKEQIERAESKLYDLASEGINEKSFTKIAIPISESIASINRAMKNNDHVIGISTGLIDLDSKLFGFHNSDLVILAGRPAMGKTAFALNLALNACNNMLIKNKRDNEEVQSVGFFSLEMSSEQLTTRLLSMSAGIDSTTLRTGMINEANYNRLRKEAIALSELSFFIDDTPALTISAIRTRARRMKRKHNLGILFVDYLQLIRGVSKSDNRVNEVSEITQGLKAIAKELNIPVIALSQLSRAVELREDKRPMLSDLRESGSIEQDADIVMFIYREEYYLSRKEPAASDPKHAEKYAEWQDNMSKAHNITDIIIAKHRSGPVGNVQLFYDSQYSKFVNLETKYPVHPR</sequence>
<accession>Q1RI04</accession>
<feature type="chain" id="PRO_0000281066" description="Replicative DNA helicase DnaB">
    <location>
        <begin position="1"/>
        <end position="498"/>
    </location>
</feature>
<feature type="domain" description="SF4 helicase" evidence="2">
    <location>
        <begin position="197"/>
        <end position="493"/>
    </location>
</feature>
<feature type="binding site" evidence="2">
    <location>
        <begin position="228"/>
        <end position="235"/>
    </location>
    <ligand>
        <name>ATP</name>
        <dbReference type="ChEBI" id="CHEBI:30616"/>
    </ligand>
</feature>
<proteinExistence type="inferred from homology"/>
<protein>
    <recommendedName>
        <fullName>Replicative DNA helicase DnaB</fullName>
        <ecNumber evidence="1">5.6.2.3</ecNumber>
    </recommendedName>
    <alternativeName>
        <fullName evidence="3">DNA 5'-3' helicase DnaB</fullName>
    </alternativeName>
</protein>
<dbReference type="EC" id="5.6.2.3" evidence="1"/>
<dbReference type="EMBL" id="CP000087">
    <property type="protein sequence ID" value="ABE05010.1"/>
    <property type="molecule type" value="Genomic_DNA"/>
</dbReference>
<dbReference type="RefSeq" id="WP_011477591.1">
    <property type="nucleotide sequence ID" value="NC_007940.1"/>
</dbReference>
<dbReference type="SMR" id="Q1RI04"/>
<dbReference type="KEGG" id="rbe:RBE_0929"/>
<dbReference type="eggNOG" id="COG0305">
    <property type="taxonomic scope" value="Bacteria"/>
</dbReference>
<dbReference type="HOGENOM" id="CLU_005373_0_2_5"/>
<dbReference type="OrthoDB" id="9773982at2"/>
<dbReference type="Proteomes" id="UP000001951">
    <property type="component" value="Chromosome"/>
</dbReference>
<dbReference type="GO" id="GO:0005829">
    <property type="term" value="C:cytosol"/>
    <property type="evidence" value="ECO:0007669"/>
    <property type="project" value="TreeGrafter"/>
</dbReference>
<dbReference type="GO" id="GO:1990077">
    <property type="term" value="C:primosome complex"/>
    <property type="evidence" value="ECO:0007669"/>
    <property type="project" value="UniProtKB-KW"/>
</dbReference>
<dbReference type="GO" id="GO:0005524">
    <property type="term" value="F:ATP binding"/>
    <property type="evidence" value="ECO:0007669"/>
    <property type="project" value="UniProtKB-KW"/>
</dbReference>
<dbReference type="GO" id="GO:0016887">
    <property type="term" value="F:ATP hydrolysis activity"/>
    <property type="evidence" value="ECO:0007669"/>
    <property type="project" value="RHEA"/>
</dbReference>
<dbReference type="GO" id="GO:0003677">
    <property type="term" value="F:DNA binding"/>
    <property type="evidence" value="ECO:0007669"/>
    <property type="project" value="UniProtKB-KW"/>
</dbReference>
<dbReference type="GO" id="GO:0003678">
    <property type="term" value="F:DNA helicase activity"/>
    <property type="evidence" value="ECO:0007669"/>
    <property type="project" value="InterPro"/>
</dbReference>
<dbReference type="GO" id="GO:0006269">
    <property type="term" value="P:DNA replication, synthesis of primer"/>
    <property type="evidence" value="ECO:0007669"/>
    <property type="project" value="UniProtKB-KW"/>
</dbReference>
<dbReference type="CDD" id="cd00984">
    <property type="entry name" value="DnaB_C"/>
    <property type="match status" value="1"/>
</dbReference>
<dbReference type="Gene3D" id="1.10.860.10">
    <property type="entry name" value="DNAb Helicase, Chain A"/>
    <property type="match status" value="1"/>
</dbReference>
<dbReference type="Gene3D" id="3.40.50.300">
    <property type="entry name" value="P-loop containing nucleotide triphosphate hydrolases"/>
    <property type="match status" value="1"/>
</dbReference>
<dbReference type="InterPro" id="IPR036185">
    <property type="entry name" value="DNA_heli_DnaB-like_N_sf"/>
</dbReference>
<dbReference type="InterPro" id="IPR007692">
    <property type="entry name" value="DNA_helicase_DnaB"/>
</dbReference>
<dbReference type="InterPro" id="IPR007694">
    <property type="entry name" value="DNA_helicase_DnaB-like_C"/>
</dbReference>
<dbReference type="InterPro" id="IPR007693">
    <property type="entry name" value="DNA_helicase_DnaB-like_N"/>
</dbReference>
<dbReference type="InterPro" id="IPR016136">
    <property type="entry name" value="DNA_helicase_N/primase_C"/>
</dbReference>
<dbReference type="InterPro" id="IPR027417">
    <property type="entry name" value="P-loop_NTPase"/>
</dbReference>
<dbReference type="NCBIfam" id="TIGR00665">
    <property type="entry name" value="DnaB"/>
    <property type="match status" value="1"/>
</dbReference>
<dbReference type="NCBIfam" id="NF006606">
    <property type="entry name" value="PRK09165.1"/>
    <property type="match status" value="1"/>
</dbReference>
<dbReference type="PANTHER" id="PTHR30153:SF2">
    <property type="entry name" value="REPLICATIVE DNA HELICASE"/>
    <property type="match status" value="1"/>
</dbReference>
<dbReference type="PANTHER" id="PTHR30153">
    <property type="entry name" value="REPLICATIVE DNA HELICASE DNAB"/>
    <property type="match status" value="1"/>
</dbReference>
<dbReference type="Pfam" id="PF00772">
    <property type="entry name" value="DnaB"/>
    <property type="match status" value="1"/>
</dbReference>
<dbReference type="Pfam" id="PF03796">
    <property type="entry name" value="DnaB_C"/>
    <property type="match status" value="1"/>
</dbReference>
<dbReference type="SUPFAM" id="SSF48024">
    <property type="entry name" value="N-terminal domain of DnaB helicase"/>
    <property type="match status" value="1"/>
</dbReference>
<dbReference type="SUPFAM" id="SSF52540">
    <property type="entry name" value="P-loop containing nucleoside triphosphate hydrolases"/>
    <property type="match status" value="1"/>
</dbReference>
<dbReference type="PROSITE" id="PS51199">
    <property type="entry name" value="SF4_HELICASE"/>
    <property type="match status" value="1"/>
</dbReference>
<organism>
    <name type="scientific">Rickettsia bellii (strain RML369-C)</name>
    <dbReference type="NCBI Taxonomy" id="336407"/>
    <lineage>
        <taxon>Bacteria</taxon>
        <taxon>Pseudomonadati</taxon>
        <taxon>Pseudomonadota</taxon>
        <taxon>Alphaproteobacteria</taxon>
        <taxon>Rickettsiales</taxon>
        <taxon>Rickettsiaceae</taxon>
        <taxon>Rickettsieae</taxon>
        <taxon>Rickettsia</taxon>
        <taxon>belli group</taxon>
    </lineage>
</organism>
<name>DNAB_RICBR</name>
<evidence type="ECO:0000250" key="1">
    <source>
        <dbReference type="UniProtKB" id="P0ACB0"/>
    </source>
</evidence>
<evidence type="ECO:0000255" key="2">
    <source>
        <dbReference type="PROSITE-ProRule" id="PRU00596"/>
    </source>
</evidence>
<evidence type="ECO:0000305" key="3"/>
<comment type="function">
    <text evidence="1">The main replicative DNA helicase, it participates in initiation and elongation during chromosome replication. Travels ahead of the DNA replisome, separating dsDNA into templates for DNA synthesis. A processive ATP-dependent 5'-3' DNA helicase it has DNA-dependent ATPase activity.</text>
</comment>
<comment type="catalytic activity">
    <reaction evidence="1">
        <text>Couples ATP hydrolysis with the unwinding of duplex DNA at the replication fork by translocating in the 5'-3' direction. This creates two antiparallel DNA single strands (ssDNA). The leading ssDNA polymer is the template for DNA polymerase III holoenzyme which synthesizes a continuous strand.</text>
        <dbReference type="EC" id="5.6.2.3"/>
    </reaction>
</comment>
<comment type="catalytic activity">
    <reaction evidence="1">
        <text>ATP + H2O = ADP + phosphate + H(+)</text>
        <dbReference type="Rhea" id="RHEA:13065"/>
        <dbReference type="ChEBI" id="CHEBI:15377"/>
        <dbReference type="ChEBI" id="CHEBI:15378"/>
        <dbReference type="ChEBI" id="CHEBI:30616"/>
        <dbReference type="ChEBI" id="CHEBI:43474"/>
        <dbReference type="ChEBI" id="CHEBI:456216"/>
        <dbReference type="EC" id="5.6.2.3"/>
    </reaction>
</comment>
<comment type="subunit">
    <text evidence="1">Homohexamer.</text>
</comment>
<comment type="similarity">
    <text evidence="3">Belongs to the helicase family. DnaB subfamily.</text>
</comment>